<dbReference type="EC" id="3.2.2.6" evidence="3"/>
<dbReference type="EMBL" id="CP000489">
    <property type="protein sequence ID" value="ABL68230.1"/>
    <property type="molecule type" value="Genomic_DNA"/>
</dbReference>
<dbReference type="RefSeq" id="WP_011746463.1">
    <property type="nucleotide sequence ID" value="NC_008686.1"/>
</dbReference>
<dbReference type="PDB" id="3H16">
    <property type="method" value="X-ray"/>
    <property type="resolution" value="2.50 A"/>
    <property type="chains" value="A/B/C/D=146-299"/>
</dbReference>
<dbReference type="PDBsum" id="3H16"/>
<dbReference type="SMR" id="A1AY86"/>
<dbReference type="STRING" id="318586.Pden_0113"/>
<dbReference type="EnsemblBacteria" id="ABL68230">
    <property type="protein sequence ID" value="ABL68230"/>
    <property type="gene ID" value="Pden_0113"/>
</dbReference>
<dbReference type="GeneID" id="93451344"/>
<dbReference type="KEGG" id="pde:Pden_0113"/>
<dbReference type="eggNOG" id="COG4916">
    <property type="taxonomic scope" value="Bacteria"/>
</dbReference>
<dbReference type="HOGENOM" id="CLU_086674_0_0_5"/>
<dbReference type="OrthoDB" id="7055795at2"/>
<dbReference type="EvolutionaryTrace" id="A1AY86"/>
<dbReference type="Proteomes" id="UP000000361">
    <property type="component" value="Chromosome 1"/>
</dbReference>
<dbReference type="GO" id="GO:0003953">
    <property type="term" value="F:NAD+ nucleosidase activity"/>
    <property type="evidence" value="ECO:0000314"/>
    <property type="project" value="UniProtKB"/>
</dbReference>
<dbReference type="GO" id="GO:0061809">
    <property type="term" value="F:NAD+ nucleosidase activity, cyclic ADP-ribose generating"/>
    <property type="evidence" value="ECO:0007669"/>
    <property type="project" value="UniProtKB-EC"/>
</dbReference>
<dbReference type="GO" id="GO:0019677">
    <property type="term" value="P:NAD catabolic process"/>
    <property type="evidence" value="ECO:0000314"/>
    <property type="project" value="UniProtKB"/>
</dbReference>
<dbReference type="GO" id="GO:0007165">
    <property type="term" value="P:signal transduction"/>
    <property type="evidence" value="ECO:0007669"/>
    <property type="project" value="InterPro"/>
</dbReference>
<dbReference type="Gene3D" id="3.40.50.10140">
    <property type="entry name" value="Toll/interleukin-1 receptor homology (TIR) domain"/>
    <property type="match status" value="1"/>
</dbReference>
<dbReference type="InterPro" id="IPR000157">
    <property type="entry name" value="TIR_dom"/>
</dbReference>
<dbReference type="InterPro" id="IPR035897">
    <property type="entry name" value="Toll_tir_struct_dom_sf"/>
</dbReference>
<dbReference type="Pfam" id="PF13676">
    <property type="entry name" value="TIR_2"/>
    <property type="match status" value="1"/>
</dbReference>
<dbReference type="SMART" id="SM00255">
    <property type="entry name" value="TIR"/>
    <property type="match status" value="1"/>
</dbReference>
<dbReference type="SUPFAM" id="SSF52200">
    <property type="entry name" value="Toll/Interleukin receptor TIR domain"/>
    <property type="match status" value="1"/>
</dbReference>
<dbReference type="PROSITE" id="PS50104">
    <property type="entry name" value="TIR"/>
    <property type="match status" value="1"/>
</dbReference>
<feature type="chain" id="PRO_0000449141" description="NAD(+) hydrolase PdTIR">
    <location>
        <begin position="1"/>
        <end position="299"/>
    </location>
</feature>
<feature type="domain" description="TIR" evidence="1">
    <location>
        <begin position="164"/>
        <end position="297"/>
    </location>
</feature>
<feature type="active site" evidence="1">
    <location>
        <position position="239"/>
    </location>
</feature>
<feature type="binding site" evidence="1">
    <location>
        <begin position="173"/>
        <end position="174"/>
    </location>
    <ligand>
        <name>NAD(+)</name>
        <dbReference type="ChEBI" id="CHEBI:57540"/>
    </ligand>
</feature>
<feature type="binding site" evidence="1">
    <location>
        <position position="203"/>
    </location>
    <ligand>
        <name>NAD(+)</name>
        <dbReference type="ChEBI" id="CHEBI:57540"/>
    </ligand>
</feature>
<feature type="strand" evidence="8">
    <location>
        <begin position="165"/>
        <end position="173"/>
    </location>
</feature>
<feature type="helix" evidence="8">
    <location>
        <begin position="174"/>
        <end position="176"/>
    </location>
</feature>
<feature type="turn" evidence="8">
    <location>
        <begin position="177"/>
        <end position="180"/>
    </location>
</feature>
<feature type="helix" evidence="8">
    <location>
        <begin position="181"/>
        <end position="190"/>
    </location>
</feature>
<feature type="helix" evidence="8">
    <location>
        <begin position="198"/>
        <end position="200"/>
    </location>
</feature>
<feature type="helix" evidence="8">
    <location>
        <begin position="208"/>
        <end position="216"/>
    </location>
</feature>
<feature type="strand" evidence="8">
    <location>
        <begin position="218"/>
        <end position="227"/>
    </location>
</feature>
<feature type="helix" evidence="8">
    <location>
        <begin position="228"/>
        <end position="231"/>
    </location>
</feature>
<feature type="helix" evidence="8">
    <location>
        <begin position="237"/>
        <end position="243"/>
    </location>
</feature>
<feature type="strand" evidence="8">
    <location>
        <begin position="254"/>
        <end position="260"/>
    </location>
</feature>
<feature type="helix" evidence="8">
    <location>
        <begin position="264"/>
        <end position="266"/>
    </location>
</feature>
<feature type="turn" evidence="8">
    <location>
        <begin position="267"/>
        <end position="269"/>
    </location>
</feature>
<feature type="turn" evidence="8">
    <location>
        <begin position="281"/>
        <end position="283"/>
    </location>
</feature>
<feature type="helix" evidence="8">
    <location>
        <begin position="286"/>
        <end position="297"/>
    </location>
</feature>
<gene>
    <name evidence="6" type="ordered locus">Pden_0113</name>
</gene>
<keyword id="KW-0002">3D-structure</keyword>
<keyword id="KW-0378">Hydrolase</keyword>
<keyword id="KW-0520">NAD</keyword>
<keyword id="KW-1185">Reference proteome</keyword>
<comment type="function">
    <text evidence="3">NAD(+) hydrolase (NADase) that catalyzes cleavage of NAD(+) into ADP-D-ribose (ADPR) and nicotinamide.</text>
</comment>
<comment type="catalytic activity">
    <reaction evidence="3">
        <text>NAD(+) + H2O = ADP-D-ribose + nicotinamide + H(+)</text>
        <dbReference type="Rhea" id="RHEA:16301"/>
        <dbReference type="ChEBI" id="CHEBI:15377"/>
        <dbReference type="ChEBI" id="CHEBI:15378"/>
        <dbReference type="ChEBI" id="CHEBI:17154"/>
        <dbReference type="ChEBI" id="CHEBI:57540"/>
        <dbReference type="ChEBI" id="CHEBI:57967"/>
        <dbReference type="EC" id="3.2.2.6"/>
    </reaction>
    <physiologicalReaction direction="left-to-right" evidence="3">
        <dbReference type="Rhea" id="RHEA:16302"/>
    </physiologicalReaction>
</comment>
<comment type="subunit">
    <text evidence="2">Homodimer (PubMed:19535337). Interacts with host MYD88 (PubMed:19535337).</text>
</comment>
<comment type="domain">
    <text evidence="1">The TIR domain mediates NAD(+) hydrolase (NADase) activity. Self-association of TIR domains is required for NADase activity.</text>
</comment>
<evidence type="ECO:0000255" key="1">
    <source>
        <dbReference type="PROSITE-ProRule" id="PRU00204"/>
    </source>
</evidence>
<evidence type="ECO:0000269" key="2">
    <source>
    </source>
</evidence>
<evidence type="ECO:0000269" key="3">
    <source>
    </source>
</evidence>
<evidence type="ECO:0000303" key="4">
    <source>
    </source>
</evidence>
<evidence type="ECO:0000305" key="5"/>
<evidence type="ECO:0000312" key="6">
    <source>
        <dbReference type="EMBL" id="ABL68230.1"/>
    </source>
</evidence>
<evidence type="ECO:0007744" key="7">
    <source>
        <dbReference type="PDB" id="3H16"/>
    </source>
</evidence>
<evidence type="ECO:0007829" key="8">
    <source>
        <dbReference type="PDB" id="3H16"/>
    </source>
</evidence>
<name>PDTIR_PARDP</name>
<accession>A1AY86</accession>
<organism>
    <name type="scientific">Paracoccus denitrificans (strain Pd 1222)</name>
    <dbReference type="NCBI Taxonomy" id="318586"/>
    <lineage>
        <taxon>Bacteria</taxon>
        <taxon>Pseudomonadati</taxon>
        <taxon>Pseudomonadota</taxon>
        <taxon>Alphaproteobacteria</taxon>
        <taxon>Rhodobacterales</taxon>
        <taxon>Paracoccaceae</taxon>
        <taxon>Paracoccus</taxon>
    </lineage>
</organism>
<protein>
    <recommendedName>
        <fullName evidence="5">NAD(+) hydrolase PdTIR</fullName>
        <ecNumber evidence="3">3.2.2.6</ecNumber>
    </recommendedName>
    <alternativeName>
        <fullName evidence="4">TIR domain-containing protein in P.denitrificans</fullName>
        <shortName evidence="4">PdTIR</shortName>
    </alternativeName>
</protein>
<reference key="1">
    <citation type="submission" date="2006-12" db="EMBL/GenBank/DDBJ databases">
        <title>Complete sequence of chromosome 1 of Paracoccus denitrificans PD1222.</title>
        <authorList>
            <person name="Copeland A."/>
            <person name="Lucas S."/>
            <person name="Lapidus A."/>
            <person name="Barry K."/>
            <person name="Detter J.C."/>
            <person name="Glavina del Rio T."/>
            <person name="Hammon N."/>
            <person name="Israni S."/>
            <person name="Dalin E."/>
            <person name="Tice H."/>
            <person name="Pitluck S."/>
            <person name="Munk A.C."/>
            <person name="Brettin T."/>
            <person name="Bruce D."/>
            <person name="Han C."/>
            <person name="Tapia R."/>
            <person name="Gilna P."/>
            <person name="Schmutz J."/>
            <person name="Larimer F."/>
            <person name="Land M."/>
            <person name="Hauser L."/>
            <person name="Kyrpides N."/>
            <person name="Lykidis A."/>
            <person name="Spiro S."/>
            <person name="Richardson D.J."/>
            <person name="Moir J.W.B."/>
            <person name="Ferguson S.J."/>
            <person name="van Spanning R.J.M."/>
            <person name="Richardson P."/>
        </authorList>
    </citation>
    <scope>NUCLEOTIDE SEQUENCE [LARGE SCALE GENOMIC DNA]</scope>
    <source>
        <strain>Pd 1222</strain>
    </source>
</reference>
<reference key="2">
    <citation type="journal article" date="2018" name="Curr. Biol.">
        <title>TIR domain proteins are an ancient family of NAD+-consuming enzymes.</title>
        <authorList>
            <person name="Essuman K."/>
            <person name="Summers D.W."/>
            <person name="Sasaki Y."/>
            <person name="Mao X."/>
            <person name="Yim A.K.Y."/>
            <person name="DiAntonio A."/>
            <person name="Milbrandt J."/>
        </authorList>
    </citation>
    <scope>FUNCTION</scope>
    <scope>CATALYTIC ACTIVITY</scope>
</reference>
<reference evidence="7" key="3">
    <citation type="journal article" date="2009" name="J. Biol. Chem.">
        <title>Molecular mimicry in innate immunity: crystal structure of a bacterial TIR domain.</title>
        <authorList>
            <person name="Chan S.L."/>
            <person name="Low L.Y."/>
            <person name="Hsu S."/>
            <person name="Li S."/>
            <person name="Liu T."/>
            <person name="Santelli E."/>
            <person name="Le Negrate G."/>
            <person name="Reed J.C."/>
            <person name="Woods V.L."/>
            <person name="Pascual J."/>
        </authorList>
    </citation>
    <scope>X-RAY CRYSTALLOGRAPHY (2.50 ANGSTROMS) OF 146-299</scope>
    <scope>INTERACTION WITH HOST MYD88</scope>
    <scope>SUBUNIT</scope>
</reference>
<sequence>MSANDRAIETLRREIAKLQTDGAAIARKDAGIRAKLASAMAAQAKAKTAPALRLKQAEASRLEKELMATSKSQADIATKIAKKQSSLSAKLVVQANEAKKADAKAKKNQERVSKTQEEATRKLEAGYRKLTLENQSLEQRLQRELSAMKPTAGPTTNADLTSAPPHDIFISHAWEDKADFVEALAHTLRAAGAEVWYDDFSLRPGDSLRRSIDKGLGSSRFGIVVLSTHFFKKEWPQKELDGLFQLESSGRSRILPIWHKVSKDEVASFSPTMADKLAFNTSTKSVDEIVADLMAIIRD</sequence>
<proteinExistence type="evidence at protein level"/>